<evidence type="ECO:0000255" key="1">
    <source>
        <dbReference type="HAMAP-Rule" id="MF_00268"/>
    </source>
</evidence>
<keyword id="KW-0067">ATP-binding</keyword>
<keyword id="KW-0963">Cytoplasm</keyword>
<keyword id="KW-0227">DNA damage</keyword>
<keyword id="KW-0233">DNA recombination</keyword>
<keyword id="KW-0234">DNA repair</keyword>
<keyword id="KW-0238">DNA-binding</keyword>
<keyword id="KW-0547">Nucleotide-binding</keyword>
<keyword id="KW-0742">SOS response</keyword>
<comment type="function">
    <text evidence="1">Can catalyze the hydrolysis of ATP in the presence of single-stranded DNA, the ATP-dependent uptake of single-stranded DNA by duplex DNA, and the ATP-dependent hybridization of homologous single-stranded DNAs. It interacts with LexA causing its activation and leading to its autocatalytic cleavage.</text>
</comment>
<comment type="subcellular location">
    <subcellularLocation>
        <location evidence="1">Cytoplasm</location>
    </subcellularLocation>
</comment>
<comment type="similarity">
    <text evidence="1">Belongs to the RecA family.</text>
</comment>
<proteinExistence type="inferred from homology"/>
<protein>
    <recommendedName>
        <fullName evidence="1">Protein RecA</fullName>
    </recommendedName>
    <alternativeName>
        <fullName evidence="1">Recombinase A</fullName>
    </alternativeName>
</protein>
<sequence>MSDEKQKKSVLEKALKRIEENFGKGSIMILGDETQVQPVEVIPTGSLAIDIATGVGGYPRGRIVEIFGQESSGKTTLALHAIAEAQKMGGVAAFIDAEHALDPVYAKNLGVDLKSLLISQPDHGEQALEIVDELVRSGVVDLIVVDSVAALVPRAEIEGAMGDMQVGLQARLMSQALRKIAGSVNKSKAVVIFTNQIRMKIGVMFGSPETTTGGLALKFYATMRMEVRRGEPIKEGKDVIGNVISVKIVKNKVAPPFKTAQTYIIYGKGIDREYELFNIAVEESMVERKGSWYYYTTLKGEEVSLGQGSSNAVQFLKDNPEIAGEIERRIREKYGLLSVEKEEQKKEEKSSDEEAS</sequence>
<dbReference type="EMBL" id="CP000702">
    <property type="protein sequence ID" value="ABQ46956.1"/>
    <property type="molecule type" value="Genomic_DNA"/>
</dbReference>
<dbReference type="RefSeq" id="WP_011943499.1">
    <property type="nucleotide sequence ID" value="NC_009486.1"/>
</dbReference>
<dbReference type="SMR" id="A5IL83"/>
<dbReference type="STRING" id="390874.Tpet_0938"/>
<dbReference type="KEGG" id="tpt:Tpet_0938"/>
<dbReference type="eggNOG" id="COG0468">
    <property type="taxonomic scope" value="Bacteria"/>
</dbReference>
<dbReference type="HOGENOM" id="CLU_040469_3_2_0"/>
<dbReference type="Proteomes" id="UP000006558">
    <property type="component" value="Chromosome"/>
</dbReference>
<dbReference type="GO" id="GO:0005829">
    <property type="term" value="C:cytosol"/>
    <property type="evidence" value="ECO:0007669"/>
    <property type="project" value="TreeGrafter"/>
</dbReference>
<dbReference type="GO" id="GO:0005524">
    <property type="term" value="F:ATP binding"/>
    <property type="evidence" value="ECO:0007669"/>
    <property type="project" value="UniProtKB-UniRule"/>
</dbReference>
<dbReference type="GO" id="GO:0016887">
    <property type="term" value="F:ATP hydrolysis activity"/>
    <property type="evidence" value="ECO:0007669"/>
    <property type="project" value="InterPro"/>
</dbReference>
<dbReference type="GO" id="GO:0140664">
    <property type="term" value="F:ATP-dependent DNA damage sensor activity"/>
    <property type="evidence" value="ECO:0007669"/>
    <property type="project" value="InterPro"/>
</dbReference>
<dbReference type="GO" id="GO:0003684">
    <property type="term" value="F:damaged DNA binding"/>
    <property type="evidence" value="ECO:0007669"/>
    <property type="project" value="UniProtKB-UniRule"/>
</dbReference>
<dbReference type="GO" id="GO:0003697">
    <property type="term" value="F:single-stranded DNA binding"/>
    <property type="evidence" value="ECO:0007669"/>
    <property type="project" value="UniProtKB-UniRule"/>
</dbReference>
<dbReference type="GO" id="GO:0006310">
    <property type="term" value="P:DNA recombination"/>
    <property type="evidence" value="ECO:0007669"/>
    <property type="project" value="UniProtKB-UniRule"/>
</dbReference>
<dbReference type="GO" id="GO:0006281">
    <property type="term" value="P:DNA repair"/>
    <property type="evidence" value="ECO:0007669"/>
    <property type="project" value="UniProtKB-UniRule"/>
</dbReference>
<dbReference type="GO" id="GO:0009432">
    <property type="term" value="P:SOS response"/>
    <property type="evidence" value="ECO:0007669"/>
    <property type="project" value="UniProtKB-UniRule"/>
</dbReference>
<dbReference type="CDD" id="cd00983">
    <property type="entry name" value="RecA"/>
    <property type="match status" value="1"/>
</dbReference>
<dbReference type="FunFam" id="3.40.50.300:FF:000087">
    <property type="entry name" value="Recombinase RecA"/>
    <property type="match status" value="1"/>
</dbReference>
<dbReference type="Gene3D" id="3.40.50.300">
    <property type="entry name" value="P-loop containing nucleotide triphosphate hydrolases"/>
    <property type="match status" value="1"/>
</dbReference>
<dbReference type="HAMAP" id="MF_00268">
    <property type="entry name" value="RecA"/>
    <property type="match status" value="1"/>
</dbReference>
<dbReference type="InterPro" id="IPR003593">
    <property type="entry name" value="AAA+_ATPase"/>
</dbReference>
<dbReference type="InterPro" id="IPR013765">
    <property type="entry name" value="DNA_recomb/repair_RecA"/>
</dbReference>
<dbReference type="InterPro" id="IPR020584">
    <property type="entry name" value="DNA_recomb/repair_RecA_CS"/>
</dbReference>
<dbReference type="InterPro" id="IPR027417">
    <property type="entry name" value="P-loop_NTPase"/>
</dbReference>
<dbReference type="InterPro" id="IPR049261">
    <property type="entry name" value="RecA-like_C"/>
</dbReference>
<dbReference type="InterPro" id="IPR049428">
    <property type="entry name" value="RecA-like_N"/>
</dbReference>
<dbReference type="InterPro" id="IPR020588">
    <property type="entry name" value="RecA_ATP-bd"/>
</dbReference>
<dbReference type="InterPro" id="IPR023400">
    <property type="entry name" value="RecA_C_sf"/>
</dbReference>
<dbReference type="InterPro" id="IPR020587">
    <property type="entry name" value="RecA_monomer-monomer_interface"/>
</dbReference>
<dbReference type="NCBIfam" id="TIGR02012">
    <property type="entry name" value="tigrfam_recA"/>
    <property type="match status" value="1"/>
</dbReference>
<dbReference type="PANTHER" id="PTHR45900:SF1">
    <property type="entry name" value="MITOCHONDRIAL DNA REPAIR PROTEIN RECA HOMOLOG-RELATED"/>
    <property type="match status" value="1"/>
</dbReference>
<dbReference type="PANTHER" id="PTHR45900">
    <property type="entry name" value="RECA"/>
    <property type="match status" value="1"/>
</dbReference>
<dbReference type="Pfam" id="PF00154">
    <property type="entry name" value="RecA"/>
    <property type="match status" value="1"/>
</dbReference>
<dbReference type="Pfam" id="PF21096">
    <property type="entry name" value="RecA_C"/>
    <property type="match status" value="1"/>
</dbReference>
<dbReference type="PRINTS" id="PR00142">
    <property type="entry name" value="RECA"/>
</dbReference>
<dbReference type="SMART" id="SM00382">
    <property type="entry name" value="AAA"/>
    <property type="match status" value="1"/>
</dbReference>
<dbReference type="SUPFAM" id="SSF52540">
    <property type="entry name" value="P-loop containing nucleoside triphosphate hydrolases"/>
    <property type="match status" value="1"/>
</dbReference>
<dbReference type="SUPFAM" id="SSF54752">
    <property type="entry name" value="RecA protein, C-terminal domain"/>
    <property type="match status" value="1"/>
</dbReference>
<dbReference type="PROSITE" id="PS00321">
    <property type="entry name" value="RECA_1"/>
    <property type="match status" value="1"/>
</dbReference>
<dbReference type="PROSITE" id="PS50162">
    <property type="entry name" value="RECA_2"/>
    <property type="match status" value="1"/>
</dbReference>
<dbReference type="PROSITE" id="PS50163">
    <property type="entry name" value="RECA_3"/>
    <property type="match status" value="1"/>
</dbReference>
<reference key="1">
    <citation type="submission" date="2007-05" db="EMBL/GenBank/DDBJ databases">
        <title>Complete sequence of Thermotoga petrophila RKU-1.</title>
        <authorList>
            <consortium name="US DOE Joint Genome Institute"/>
            <person name="Copeland A."/>
            <person name="Lucas S."/>
            <person name="Lapidus A."/>
            <person name="Barry K."/>
            <person name="Glavina del Rio T."/>
            <person name="Dalin E."/>
            <person name="Tice H."/>
            <person name="Pitluck S."/>
            <person name="Sims D."/>
            <person name="Brettin T."/>
            <person name="Bruce D."/>
            <person name="Detter J.C."/>
            <person name="Han C."/>
            <person name="Tapia R."/>
            <person name="Schmutz J."/>
            <person name="Larimer F."/>
            <person name="Land M."/>
            <person name="Hauser L."/>
            <person name="Kyrpides N."/>
            <person name="Mikhailova N."/>
            <person name="Nelson K."/>
            <person name="Gogarten J.P."/>
            <person name="Noll K."/>
            <person name="Richardson P."/>
        </authorList>
    </citation>
    <scope>NUCLEOTIDE SEQUENCE [LARGE SCALE GENOMIC DNA]</scope>
    <source>
        <strain>ATCC BAA-488 / DSM 13995 / JCM 10881 / RKU-1</strain>
    </source>
</reference>
<name>RECA_THEP1</name>
<feature type="chain" id="PRO_1000048028" description="Protein RecA">
    <location>
        <begin position="1"/>
        <end position="356"/>
    </location>
</feature>
<feature type="binding site" evidence="1">
    <location>
        <begin position="68"/>
        <end position="75"/>
    </location>
    <ligand>
        <name>ATP</name>
        <dbReference type="ChEBI" id="CHEBI:30616"/>
    </ligand>
</feature>
<accession>A5IL83</accession>
<gene>
    <name evidence="1" type="primary">recA</name>
    <name type="ordered locus">Tpet_0938</name>
</gene>
<organism>
    <name type="scientific">Thermotoga petrophila (strain ATCC BAA-488 / DSM 13995 / JCM 10881 / RKU-1)</name>
    <dbReference type="NCBI Taxonomy" id="390874"/>
    <lineage>
        <taxon>Bacteria</taxon>
        <taxon>Thermotogati</taxon>
        <taxon>Thermotogota</taxon>
        <taxon>Thermotogae</taxon>
        <taxon>Thermotogales</taxon>
        <taxon>Thermotogaceae</taxon>
        <taxon>Thermotoga</taxon>
    </lineage>
</organism>